<gene>
    <name evidence="1" type="primary">ispE</name>
    <name type="ordered locus">PSEEN0858</name>
</gene>
<protein>
    <recommendedName>
        <fullName evidence="1">4-diphosphocytidyl-2-C-methyl-D-erythritol kinase</fullName>
        <shortName evidence="1">CMK</shortName>
        <ecNumber evidence="1">2.7.1.148</ecNumber>
    </recommendedName>
    <alternativeName>
        <fullName evidence="1">4-(cytidine-5'-diphospho)-2-C-methyl-D-erythritol kinase</fullName>
    </alternativeName>
</protein>
<dbReference type="EC" id="2.7.1.148" evidence="1"/>
<dbReference type="EMBL" id="CT573326">
    <property type="protein sequence ID" value="CAK13769.1"/>
    <property type="molecule type" value="Genomic_DNA"/>
</dbReference>
<dbReference type="SMR" id="Q1IEY5"/>
<dbReference type="STRING" id="384676.PSEEN0858"/>
<dbReference type="KEGG" id="pen:PSEEN0858"/>
<dbReference type="eggNOG" id="COG1947">
    <property type="taxonomic scope" value="Bacteria"/>
</dbReference>
<dbReference type="HOGENOM" id="CLU_053057_3_0_6"/>
<dbReference type="OrthoDB" id="9809438at2"/>
<dbReference type="UniPathway" id="UPA00056">
    <property type="reaction ID" value="UER00094"/>
</dbReference>
<dbReference type="Proteomes" id="UP000000658">
    <property type="component" value="Chromosome"/>
</dbReference>
<dbReference type="GO" id="GO:0050515">
    <property type="term" value="F:4-(cytidine 5'-diphospho)-2-C-methyl-D-erythritol kinase activity"/>
    <property type="evidence" value="ECO:0007669"/>
    <property type="project" value="UniProtKB-UniRule"/>
</dbReference>
<dbReference type="GO" id="GO:0005524">
    <property type="term" value="F:ATP binding"/>
    <property type="evidence" value="ECO:0007669"/>
    <property type="project" value="UniProtKB-UniRule"/>
</dbReference>
<dbReference type="GO" id="GO:0019288">
    <property type="term" value="P:isopentenyl diphosphate biosynthetic process, methylerythritol 4-phosphate pathway"/>
    <property type="evidence" value="ECO:0007669"/>
    <property type="project" value="UniProtKB-UniRule"/>
</dbReference>
<dbReference type="GO" id="GO:0016114">
    <property type="term" value="P:terpenoid biosynthetic process"/>
    <property type="evidence" value="ECO:0007669"/>
    <property type="project" value="InterPro"/>
</dbReference>
<dbReference type="FunFam" id="3.30.230.10:FF:000022">
    <property type="entry name" value="4-diphosphocytidyl-2-C-methyl-D-erythritol kinase"/>
    <property type="match status" value="1"/>
</dbReference>
<dbReference type="Gene3D" id="3.30.230.10">
    <property type="match status" value="1"/>
</dbReference>
<dbReference type="Gene3D" id="3.30.70.890">
    <property type="entry name" value="GHMP kinase, C-terminal domain"/>
    <property type="match status" value="1"/>
</dbReference>
<dbReference type="HAMAP" id="MF_00061">
    <property type="entry name" value="IspE"/>
    <property type="match status" value="1"/>
</dbReference>
<dbReference type="InterPro" id="IPR013750">
    <property type="entry name" value="GHMP_kinase_C_dom"/>
</dbReference>
<dbReference type="InterPro" id="IPR036554">
    <property type="entry name" value="GHMP_kinase_C_sf"/>
</dbReference>
<dbReference type="InterPro" id="IPR006204">
    <property type="entry name" value="GHMP_kinase_N_dom"/>
</dbReference>
<dbReference type="InterPro" id="IPR004424">
    <property type="entry name" value="IspE"/>
</dbReference>
<dbReference type="InterPro" id="IPR020568">
    <property type="entry name" value="Ribosomal_Su5_D2-typ_SF"/>
</dbReference>
<dbReference type="InterPro" id="IPR014721">
    <property type="entry name" value="Ribsml_uS5_D2-typ_fold_subgr"/>
</dbReference>
<dbReference type="NCBIfam" id="TIGR00154">
    <property type="entry name" value="ispE"/>
    <property type="match status" value="1"/>
</dbReference>
<dbReference type="PANTHER" id="PTHR43527">
    <property type="entry name" value="4-DIPHOSPHOCYTIDYL-2-C-METHYL-D-ERYTHRITOL KINASE, CHLOROPLASTIC"/>
    <property type="match status" value="1"/>
</dbReference>
<dbReference type="PANTHER" id="PTHR43527:SF2">
    <property type="entry name" value="4-DIPHOSPHOCYTIDYL-2-C-METHYL-D-ERYTHRITOL KINASE, CHLOROPLASTIC"/>
    <property type="match status" value="1"/>
</dbReference>
<dbReference type="Pfam" id="PF08544">
    <property type="entry name" value="GHMP_kinases_C"/>
    <property type="match status" value="1"/>
</dbReference>
<dbReference type="Pfam" id="PF00288">
    <property type="entry name" value="GHMP_kinases_N"/>
    <property type="match status" value="1"/>
</dbReference>
<dbReference type="PIRSF" id="PIRSF010376">
    <property type="entry name" value="IspE"/>
    <property type="match status" value="1"/>
</dbReference>
<dbReference type="SUPFAM" id="SSF55060">
    <property type="entry name" value="GHMP Kinase, C-terminal domain"/>
    <property type="match status" value="1"/>
</dbReference>
<dbReference type="SUPFAM" id="SSF54211">
    <property type="entry name" value="Ribosomal protein S5 domain 2-like"/>
    <property type="match status" value="1"/>
</dbReference>
<comment type="function">
    <text evidence="1">Catalyzes the phosphorylation of the position 2 hydroxy group of 4-diphosphocytidyl-2C-methyl-D-erythritol.</text>
</comment>
<comment type="catalytic activity">
    <reaction evidence="1">
        <text>4-CDP-2-C-methyl-D-erythritol + ATP = 4-CDP-2-C-methyl-D-erythritol 2-phosphate + ADP + H(+)</text>
        <dbReference type="Rhea" id="RHEA:18437"/>
        <dbReference type="ChEBI" id="CHEBI:15378"/>
        <dbReference type="ChEBI" id="CHEBI:30616"/>
        <dbReference type="ChEBI" id="CHEBI:57823"/>
        <dbReference type="ChEBI" id="CHEBI:57919"/>
        <dbReference type="ChEBI" id="CHEBI:456216"/>
        <dbReference type="EC" id="2.7.1.148"/>
    </reaction>
</comment>
<comment type="pathway">
    <text evidence="1">Isoprenoid biosynthesis; isopentenyl diphosphate biosynthesis via DXP pathway; isopentenyl diphosphate from 1-deoxy-D-xylulose 5-phosphate: step 3/6.</text>
</comment>
<comment type="similarity">
    <text evidence="1">Belongs to the GHMP kinase family. IspE subfamily.</text>
</comment>
<name>ISPE_PSEE4</name>
<evidence type="ECO:0000255" key="1">
    <source>
        <dbReference type="HAMAP-Rule" id="MF_00061"/>
    </source>
</evidence>
<feature type="chain" id="PRO_1000007876" description="4-diphosphocytidyl-2-C-methyl-D-erythritol kinase">
    <location>
        <begin position="1"/>
        <end position="286"/>
    </location>
</feature>
<feature type="active site" evidence="1">
    <location>
        <position position="11"/>
    </location>
</feature>
<feature type="active site" evidence="1">
    <location>
        <position position="136"/>
    </location>
</feature>
<feature type="binding site" evidence="1">
    <location>
        <begin position="94"/>
        <end position="104"/>
    </location>
    <ligand>
        <name>ATP</name>
        <dbReference type="ChEBI" id="CHEBI:30616"/>
    </ligand>
</feature>
<keyword id="KW-0067">ATP-binding</keyword>
<keyword id="KW-0414">Isoprene biosynthesis</keyword>
<keyword id="KW-0418">Kinase</keyword>
<keyword id="KW-0547">Nucleotide-binding</keyword>
<keyword id="KW-0808">Transferase</keyword>
<proteinExistence type="inferred from homology"/>
<sequence>MEKLTLPAPAKLNLWLHITGRRADGYHELETVFQFLDHGDELSFSLREDGVIRLHSEIADVPHDSNLIVRAARKLQEQSGTRLGADIWLHKVLPMGGGIGGGSSDAATTLLALAHLWQLDWNEDRLAALGLALGADVPVFVRGHAAFAQGVGEQLTPVDPAEPWYVVLVPQVSVSTAEIFSHPELTRDSLPLKMRPVPEGNSRNDCQPAVEQRYPEVRNALISLGKFTEARMTGTGSCVFGAFPSKAEADRVLALLSETQTGFVAKGSNVSMLHRKLQSLIKKSSS</sequence>
<accession>Q1IEY5</accession>
<organism>
    <name type="scientific">Pseudomonas entomophila (strain L48)</name>
    <dbReference type="NCBI Taxonomy" id="384676"/>
    <lineage>
        <taxon>Bacteria</taxon>
        <taxon>Pseudomonadati</taxon>
        <taxon>Pseudomonadota</taxon>
        <taxon>Gammaproteobacteria</taxon>
        <taxon>Pseudomonadales</taxon>
        <taxon>Pseudomonadaceae</taxon>
        <taxon>Pseudomonas</taxon>
    </lineage>
</organism>
<reference key="1">
    <citation type="journal article" date="2006" name="Nat. Biotechnol.">
        <title>Complete genome sequence of the entomopathogenic and metabolically versatile soil bacterium Pseudomonas entomophila.</title>
        <authorList>
            <person name="Vodovar N."/>
            <person name="Vallenet D."/>
            <person name="Cruveiller S."/>
            <person name="Rouy Z."/>
            <person name="Barbe V."/>
            <person name="Acosta C."/>
            <person name="Cattolico L."/>
            <person name="Jubin C."/>
            <person name="Lajus A."/>
            <person name="Segurens B."/>
            <person name="Vacherie B."/>
            <person name="Wincker P."/>
            <person name="Weissenbach J."/>
            <person name="Lemaitre B."/>
            <person name="Medigue C."/>
            <person name="Boccard F."/>
        </authorList>
    </citation>
    <scope>NUCLEOTIDE SEQUENCE [LARGE SCALE GENOMIC DNA]</scope>
    <source>
        <strain>L48</strain>
    </source>
</reference>